<gene>
    <name evidence="2" type="primary">rpsL</name>
    <name type="ordered locus">SRU_1030</name>
</gene>
<proteinExistence type="inferred from homology"/>
<comment type="function">
    <text evidence="2">With S4 and S5 plays an important role in translational accuracy.</text>
</comment>
<comment type="function">
    <text evidence="2">Interacts with and stabilizes bases of the 16S rRNA that are involved in tRNA selection in the A site and with the mRNA backbone. Located at the interface of the 30S and 50S subunits, it traverses the body of the 30S subunit contacting proteins on the other side and probably holding the rRNA structure together. The combined cluster of proteins S8, S12 and S17 appears to hold together the shoulder and platform of the 30S subunit.</text>
</comment>
<comment type="subunit">
    <text evidence="2">Part of the 30S ribosomal subunit. Contacts proteins S8 and S17. May interact with IF1 in the 30S initiation complex.</text>
</comment>
<comment type="similarity">
    <text evidence="2">Belongs to the universal ribosomal protein uS12 family.</text>
</comment>
<comment type="sequence caution" evidence="4">
    <conflict type="erroneous initiation">
        <sequence resource="EMBL-CDS" id="ABC43812"/>
    </conflict>
</comment>
<sequence length="124" mass="13788">MPTTQQLIRKGRKTEEETSDAPALEGSPQRRGVCTRVYTTTPKKPNSALRKVARVRLTNGNEVTAYIPGEGHNLQEHSIVLVRGGRVKDLPGVKYHIVRGALDTAGVEERRQGRSKYGTKKPRE</sequence>
<name>RS12_SALRD</name>
<organism>
    <name type="scientific">Salinibacter ruber (strain DSM 13855 / M31)</name>
    <dbReference type="NCBI Taxonomy" id="309807"/>
    <lineage>
        <taxon>Bacteria</taxon>
        <taxon>Pseudomonadati</taxon>
        <taxon>Rhodothermota</taxon>
        <taxon>Rhodothermia</taxon>
        <taxon>Rhodothermales</taxon>
        <taxon>Salinibacteraceae</taxon>
        <taxon>Salinibacter</taxon>
    </lineage>
</organism>
<evidence type="ECO:0000250" key="1"/>
<evidence type="ECO:0000255" key="2">
    <source>
        <dbReference type="HAMAP-Rule" id="MF_00403"/>
    </source>
</evidence>
<evidence type="ECO:0000256" key="3">
    <source>
        <dbReference type="SAM" id="MobiDB-lite"/>
    </source>
</evidence>
<evidence type="ECO:0000305" key="4"/>
<reference key="1">
    <citation type="journal article" date="2005" name="Proc. Natl. Acad. Sci. U.S.A.">
        <title>The genome of Salinibacter ruber: convergence and gene exchange among hyperhalophilic bacteria and archaea.</title>
        <authorList>
            <person name="Mongodin E.F."/>
            <person name="Nelson K.E."/>
            <person name="Daugherty S."/>
            <person name="DeBoy R.T."/>
            <person name="Wister J."/>
            <person name="Khouri H."/>
            <person name="Weidman J."/>
            <person name="Walsh D.A."/>
            <person name="Papke R.T."/>
            <person name="Sanchez Perez G."/>
            <person name="Sharma A.K."/>
            <person name="Nesbo C.L."/>
            <person name="MacLeod D."/>
            <person name="Bapteste E."/>
            <person name="Doolittle W.F."/>
            <person name="Charlebois R.L."/>
            <person name="Legault B."/>
            <person name="Rodriguez-Valera F."/>
        </authorList>
    </citation>
    <scope>NUCLEOTIDE SEQUENCE [LARGE SCALE GENOMIC DNA]</scope>
    <source>
        <strain>DSM 13855 / CECT 5946 / M31</strain>
    </source>
</reference>
<accession>Q2S3R9</accession>
<feature type="chain" id="PRO_0000238142" description="Small ribosomal subunit protein uS12">
    <location>
        <begin position="1"/>
        <end position="124"/>
    </location>
</feature>
<feature type="region of interest" description="Disordered" evidence="3">
    <location>
        <begin position="1"/>
        <end position="42"/>
    </location>
</feature>
<feature type="region of interest" description="Disordered" evidence="3">
    <location>
        <begin position="105"/>
        <end position="124"/>
    </location>
</feature>
<feature type="compositionally biased region" description="Basic residues" evidence="3">
    <location>
        <begin position="113"/>
        <end position="124"/>
    </location>
</feature>
<feature type="modified residue" description="3-methylthioaspartic acid" evidence="1">
    <location>
        <position position="89"/>
    </location>
</feature>
<dbReference type="EMBL" id="CP000159">
    <property type="protein sequence ID" value="ABC43812.1"/>
    <property type="status" value="ALT_INIT"/>
    <property type="molecule type" value="Genomic_DNA"/>
</dbReference>
<dbReference type="RefSeq" id="WP_011403790.1">
    <property type="nucleotide sequence ID" value="NC_007677.1"/>
</dbReference>
<dbReference type="RefSeq" id="YP_445162.2">
    <property type="nucleotide sequence ID" value="NC_007677.1"/>
</dbReference>
<dbReference type="SMR" id="Q2S3R9"/>
<dbReference type="STRING" id="309807.SRU_1030"/>
<dbReference type="EnsemblBacteria" id="ABC43812">
    <property type="protein sequence ID" value="ABC43812"/>
    <property type="gene ID" value="SRU_1030"/>
</dbReference>
<dbReference type="GeneID" id="83727959"/>
<dbReference type="KEGG" id="sru:SRU_1030"/>
<dbReference type="PATRIC" id="fig|309807.25.peg.1068"/>
<dbReference type="eggNOG" id="COG0048">
    <property type="taxonomic scope" value="Bacteria"/>
</dbReference>
<dbReference type="HOGENOM" id="CLU_104295_1_2_10"/>
<dbReference type="OrthoDB" id="9802366at2"/>
<dbReference type="Proteomes" id="UP000008674">
    <property type="component" value="Chromosome"/>
</dbReference>
<dbReference type="GO" id="GO:0015935">
    <property type="term" value="C:small ribosomal subunit"/>
    <property type="evidence" value="ECO:0007669"/>
    <property type="project" value="InterPro"/>
</dbReference>
<dbReference type="GO" id="GO:0019843">
    <property type="term" value="F:rRNA binding"/>
    <property type="evidence" value="ECO:0007669"/>
    <property type="project" value="UniProtKB-UniRule"/>
</dbReference>
<dbReference type="GO" id="GO:0003735">
    <property type="term" value="F:structural constituent of ribosome"/>
    <property type="evidence" value="ECO:0007669"/>
    <property type="project" value="InterPro"/>
</dbReference>
<dbReference type="GO" id="GO:0000049">
    <property type="term" value="F:tRNA binding"/>
    <property type="evidence" value="ECO:0007669"/>
    <property type="project" value="UniProtKB-UniRule"/>
</dbReference>
<dbReference type="GO" id="GO:0006412">
    <property type="term" value="P:translation"/>
    <property type="evidence" value="ECO:0007669"/>
    <property type="project" value="UniProtKB-UniRule"/>
</dbReference>
<dbReference type="CDD" id="cd03368">
    <property type="entry name" value="Ribosomal_S12"/>
    <property type="match status" value="1"/>
</dbReference>
<dbReference type="FunFam" id="2.40.50.140:FF:000001">
    <property type="entry name" value="30S ribosomal protein S12"/>
    <property type="match status" value="1"/>
</dbReference>
<dbReference type="Gene3D" id="2.40.50.140">
    <property type="entry name" value="Nucleic acid-binding proteins"/>
    <property type="match status" value="1"/>
</dbReference>
<dbReference type="HAMAP" id="MF_00403_B">
    <property type="entry name" value="Ribosomal_uS12_B"/>
    <property type="match status" value="1"/>
</dbReference>
<dbReference type="InterPro" id="IPR012340">
    <property type="entry name" value="NA-bd_OB-fold"/>
</dbReference>
<dbReference type="InterPro" id="IPR006032">
    <property type="entry name" value="Ribosomal_uS12"/>
</dbReference>
<dbReference type="InterPro" id="IPR005679">
    <property type="entry name" value="Ribosomal_uS12_bac"/>
</dbReference>
<dbReference type="NCBIfam" id="TIGR00981">
    <property type="entry name" value="rpsL_bact"/>
    <property type="match status" value="1"/>
</dbReference>
<dbReference type="PANTHER" id="PTHR11652">
    <property type="entry name" value="30S RIBOSOMAL PROTEIN S12 FAMILY MEMBER"/>
    <property type="match status" value="1"/>
</dbReference>
<dbReference type="Pfam" id="PF00164">
    <property type="entry name" value="Ribosom_S12_S23"/>
    <property type="match status" value="1"/>
</dbReference>
<dbReference type="PIRSF" id="PIRSF002133">
    <property type="entry name" value="Ribosomal_S12/S23"/>
    <property type="match status" value="1"/>
</dbReference>
<dbReference type="PRINTS" id="PR01034">
    <property type="entry name" value="RIBOSOMALS12"/>
</dbReference>
<dbReference type="SUPFAM" id="SSF50249">
    <property type="entry name" value="Nucleic acid-binding proteins"/>
    <property type="match status" value="1"/>
</dbReference>
<dbReference type="PROSITE" id="PS00055">
    <property type="entry name" value="RIBOSOMAL_S12"/>
    <property type="match status" value="1"/>
</dbReference>
<protein>
    <recommendedName>
        <fullName evidence="2">Small ribosomal subunit protein uS12</fullName>
    </recommendedName>
    <alternativeName>
        <fullName evidence="4">30S ribosomal protein S12</fullName>
    </alternativeName>
</protein>
<keyword id="KW-0488">Methylation</keyword>
<keyword id="KW-1185">Reference proteome</keyword>
<keyword id="KW-0687">Ribonucleoprotein</keyword>
<keyword id="KW-0689">Ribosomal protein</keyword>
<keyword id="KW-0694">RNA-binding</keyword>
<keyword id="KW-0699">rRNA-binding</keyword>
<keyword id="KW-0820">tRNA-binding</keyword>